<dbReference type="EC" id="4.3.99.3" evidence="1"/>
<dbReference type="EMBL" id="AE006470">
    <property type="protein sequence ID" value="AAM71564.1"/>
    <property type="molecule type" value="Genomic_DNA"/>
</dbReference>
<dbReference type="RefSeq" id="NP_661222.1">
    <property type="nucleotide sequence ID" value="NC_002932.3"/>
</dbReference>
<dbReference type="RefSeq" id="WP_010932010.1">
    <property type="nucleotide sequence ID" value="NC_002932.3"/>
</dbReference>
<dbReference type="SMR" id="Q8KFK8"/>
<dbReference type="STRING" id="194439.CT0318"/>
<dbReference type="EnsemblBacteria" id="AAM71564">
    <property type="protein sequence ID" value="AAM71564"/>
    <property type="gene ID" value="CT0318"/>
</dbReference>
<dbReference type="KEGG" id="cte:CT0318"/>
<dbReference type="PATRIC" id="fig|194439.7.peg.308"/>
<dbReference type="eggNOG" id="COG0602">
    <property type="taxonomic scope" value="Bacteria"/>
</dbReference>
<dbReference type="HOGENOM" id="CLU_066739_2_0_10"/>
<dbReference type="OrthoDB" id="9792276at2"/>
<dbReference type="UniPathway" id="UPA00391"/>
<dbReference type="Proteomes" id="UP000001007">
    <property type="component" value="Chromosome"/>
</dbReference>
<dbReference type="GO" id="GO:0051539">
    <property type="term" value="F:4 iron, 4 sulfur cluster binding"/>
    <property type="evidence" value="ECO:0007669"/>
    <property type="project" value="UniProtKB-UniRule"/>
</dbReference>
<dbReference type="GO" id="GO:0016840">
    <property type="term" value="F:carbon-nitrogen lyase activity"/>
    <property type="evidence" value="ECO:0007669"/>
    <property type="project" value="UniProtKB-UniRule"/>
</dbReference>
<dbReference type="GO" id="GO:0000287">
    <property type="term" value="F:magnesium ion binding"/>
    <property type="evidence" value="ECO:0007669"/>
    <property type="project" value="UniProtKB-UniRule"/>
</dbReference>
<dbReference type="GO" id="GO:1904047">
    <property type="term" value="F:S-adenosyl-L-methionine binding"/>
    <property type="evidence" value="ECO:0007669"/>
    <property type="project" value="UniProtKB-UniRule"/>
</dbReference>
<dbReference type="GO" id="GO:0008616">
    <property type="term" value="P:queuosine biosynthetic process"/>
    <property type="evidence" value="ECO:0007669"/>
    <property type="project" value="UniProtKB-UniRule"/>
</dbReference>
<dbReference type="CDD" id="cd01335">
    <property type="entry name" value="Radical_SAM"/>
    <property type="match status" value="1"/>
</dbReference>
<dbReference type="Gene3D" id="3.20.20.70">
    <property type="entry name" value="Aldolase class I"/>
    <property type="match status" value="1"/>
</dbReference>
<dbReference type="HAMAP" id="MF_00917">
    <property type="entry name" value="QueE"/>
    <property type="match status" value="1"/>
</dbReference>
<dbReference type="InterPro" id="IPR024924">
    <property type="entry name" value="7-CO-7-deazaguanine_synth-like"/>
</dbReference>
<dbReference type="InterPro" id="IPR013785">
    <property type="entry name" value="Aldolase_TIM"/>
</dbReference>
<dbReference type="InterPro" id="IPR007197">
    <property type="entry name" value="rSAM"/>
</dbReference>
<dbReference type="PANTHER" id="PTHR42836">
    <property type="entry name" value="7-CARBOXY-7-DEAZAGUANINE SYNTHASE"/>
    <property type="match status" value="1"/>
</dbReference>
<dbReference type="PANTHER" id="PTHR42836:SF1">
    <property type="entry name" value="7-CARBOXY-7-DEAZAGUANINE SYNTHASE"/>
    <property type="match status" value="1"/>
</dbReference>
<dbReference type="Pfam" id="PF04055">
    <property type="entry name" value="Radical_SAM"/>
    <property type="match status" value="1"/>
</dbReference>
<dbReference type="PIRSF" id="PIRSF000370">
    <property type="entry name" value="QueE"/>
    <property type="match status" value="1"/>
</dbReference>
<dbReference type="SFLD" id="SFLDS00029">
    <property type="entry name" value="Radical_SAM"/>
    <property type="match status" value="1"/>
</dbReference>
<dbReference type="SUPFAM" id="SSF102114">
    <property type="entry name" value="Radical SAM enzymes"/>
    <property type="match status" value="1"/>
</dbReference>
<dbReference type="PROSITE" id="PS51918">
    <property type="entry name" value="RADICAL_SAM"/>
    <property type="match status" value="1"/>
</dbReference>
<proteinExistence type="inferred from homology"/>
<organism>
    <name type="scientific">Chlorobaculum tepidum (strain ATCC 49652 / DSM 12025 / NBRC 103806 / TLS)</name>
    <name type="common">Chlorobium tepidum</name>
    <dbReference type="NCBI Taxonomy" id="194439"/>
    <lineage>
        <taxon>Bacteria</taxon>
        <taxon>Pseudomonadati</taxon>
        <taxon>Chlorobiota</taxon>
        <taxon>Chlorobiia</taxon>
        <taxon>Chlorobiales</taxon>
        <taxon>Chlorobiaceae</taxon>
        <taxon>Chlorobaculum</taxon>
    </lineage>
</organism>
<keyword id="KW-0004">4Fe-4S</keyword>
<keyword id="KW-0408">Iron</keyword>
<keyword id="KW-0411">Iron-sulfur</keyword>
<keyword id="KW-0456">Lyase</keyword>
<keyword id="KW-0460">Magnesium</keyword>
<keyword id="KW-0479">Metal-binding</keyword>
<keyword id="KW-0671">Queuosine biosynthesis</keyword>
<keyword id="KW-1185">Reference proteome</keyword>
<keyword id="KW-0949">S-adenosyl-L-methionine</keyword>
<feature type="chain" id="PRO_0000416201" description="7-carboxy-7-deazaguanine synthase">
    <location>
        <begin position="1"/>
        <end position="220"/>
    </location>
</feature>
<feature type="domain" description="Radical SAM core" evidence="2">
    <location>
        <begin position="22"/>
        <end position="215"/>
    </location>
</feature>
<feature type="binding site" evidence="1">
    <location>
        <begin position="16"/>
        <end position="18"/>
    </location>
    <ligand>
        <name>substrate</name>
    </ligand>
</feature>
<feature type="binding site" evidence="1">
    <location>
        <position position="31"/>
    </location>
    <ligand>
        <name>substrate</name>
    </ligand>
</feature>
<feature type="binding site" evidence="1">
    <location>
        <position position="35"/>
    </location>
    <ligand>
        <name>[4Fe-4S] cluster</name>
        <dbReference type="ChEBI" id="CHEBI:49883"/>
        <note>4Fe-4S-S-AdoMet</note>
    </ligand>
</feature>
<feature type="binding site" evidence="1">
    <location>
        <position position="39"/>
    </location>
    <ligand>
        <name>[4Fe-4S] cluster</name>
        <dbReference type="ChEBI" id="CHEBI:49883"/>
        <note>4Fe-4S-S-AdoMet</note>
    </ligand>
</feature>
<feature type="binding site" evidence="1">
    <location>
        <position position="42"/>
    </location>
    <ligand>
        <name>[4Fe-4S] cluster</name>
        <dbReference type="ChEBI" id="CHEBI:49883"/>
        <note>4Fe-4S-S-AdoMet</note>
    </ligand>
</feature>
<feature type="binding site" evidence="1">
    <location>
        <position position="44"/>
    </location>
    <ligand>
        <name>Mg(2+)</name>
        <dbReference type="ChEBI" id="CHEBI:18420"/>
    </ligand>
</feature>
<feature type="binding site" evidence="1">
    <location>
        <position position="74"/>
    </location>
    <ligand>
        <name>substrate</name>
    </ligand>
</feature>
<feature type="binding site" evidence="1">
    <location>
        <position position="76"/>
    </location>
    <ligand>
        <name>S-adenosyl-L-methionine</name>
        <dbReference type="ChEBI" id="CHEBI:59789"/>
    </ligand>
</feature>
<accession>Q8KFK8</accession>
<evidence type="ECO:0000255" key="1">
    <source>
        <dbReference type="HAMAP-Rule" id="MF_00917"/>
    </source>
</evidence>
<evidence type="ECO:0000255" key="2">
    <source>
        <dbReference type="PROSITE-ProRule" id="PRU01266"/>
    </source>
</evidence>
<reference key="1">
    <citation type="journal article" date="2002" name="Proc. Natl. Acad. Sci. U.S.A.">
        <title>The complete genome sequence of Chlorobium tepidum TLS, a photosynthetic, anaerobic, green-sulfur bacterium.</title>
        <authorList>
            <person name="Eisen J.A."/>
            <person name="Nelson K.E."/>
            <person name="Paulsen I.T."/>
            <person name="Heidelberg J.F."/>
            <person name="Wu M."/>
            <person name="Dodson R.J."/>
            <person name="DeBoy R.T."/>
            <person name="Gwinn M.L."/>
            <person name="Nelson W.C."/>
            <person name="Haft D.H."/>
            <person name="Hickey E.K."/>
            <person name="Peterson J.D."/>
            <person name="Durkin A.S."/>
            <person name="Kolonay J.F."/>
            <person name="Yang F."/>
            <person name="Holt I.E."/>
            <person name="Umayam L.A."/>
            <person name="Mason T.M."/>
            <person name="Brenner M."/>
            <person name="Shea T.P."/>
            <person name="Parksey D.S."/>
            <person name="Nierman W.C."/>
            <person name="Feldblyum T.V."/>
            <person name="Hansen C.L."/>
            <person name="Craven M.B."/>
            <person name="Radune D."/>
            <person name="Vamathevan J.J."/>
            <person name="Khouri H.M."/>
            <person name="White O."/>
            <person name="Gruber T.M."/>
            <person name="Ketchum K.A."/>
            <person name="Venter J.C."/>
            <person name="Tettelin H."/>
            <person name="Bryant D.A."/>
            <person name="Fraser C.M."/>
        </authorList>
    </citation>
    <scope>NUCLEOTIDE SEQUENCE [LARGE SCALE GENOMIC DNA]</scope>
    <source>
        <strain>ATCC 49652 / DSM 12025 / NBRC 103806 / TLS</strain>
    </source>
</reference>
<sequence length="220" mass="24257">MSTEAPLNISEIFYSIQGESSFAGWPCAFVRLAGCGHGCRYCDTTYAEEPGTAMTIDEIMHRVLAFDAPCVEVTGGEPLLQSGTFGLLSALCDRHPVVLLETGGFLPVDRVDPRVHAIIDIKAPSSGVMEHNCAANFTLALNEPERFEFKIVVASEADYLWAKSYIAGHGILGKCSIIFGPVFGQLEPRLLAEWMLRDRLPVRMQLQLHKYIWNPDARGV</sequence>
<name>QUEE_CHLTE</name>
<comment type="function">
    <text evidence="1">Catalyzes the complex heterocyclic radical-mediated conversion of 6-carboxy-5,6,7,8-tetrahydropterin (CPH4) to 7-carboxy-7-deazaguanine (CDG), a step common to the biosynthetic pathways of all 7-deazapurine-containing compounds.</text>
</comment>
<comment type="catalytic activity">
    <reaction evidence="1">
        <text>6-carboxy-5,6,7,8-tetrahydropterin + H(+) = 7-carboxy-7-deazaguanine + NH4(+)</text>
        <dbReference type="Rhea" id="RHEA:27974"/>
        <dbReference type="ChEBI" id="CHEBI:15378"/>
        <dbReference type="ChEBI" id="CHEBI:28938"/>
        <dbReference type="ChEBI" id="CHEBI:61032"/>
        <dbReference type="ChEBI" id="CHEBI:61036"/>
        <dbReference type="EC" id="4.3.99.3"/>
    </reaction>
</comment>
<comment type="cofactor">
    <cofactor evidence="1">
        <name>[4Fe-4S] cluster</name>
        <dbReference type="ChEBI" id="CHEBI:49883"/>
    </cofactor>
    <text evidence="1">Binds 1 [4Fe-4S] cluster. The cluster is coordinated with 3 cysteines and an exchangeable S-adenosyl-L-methionine.</text>
</comment>
<comment type="cofactor">
    <cofactor evidence="1">
        <name>S-adenosyl-L-methionine</name>
        <dbReference type="ChEBI" id="CHEBI:59789"/>
    </cofactor>
    <text evidence="1">Binds 1 S-adenosyl-L-methionine per subunit.</text>
</comment>
<comment type="cofactor">
    <cofactor evidence="1">
        <name>Mg(2+)</name>
        <dbReference type="ChEBI" id="CHEBI:18420"/>
    </cofactor>
</comment>
<comment type="pathway">
    <text evidence="1">Purine metabolism; 7-cyano-7-deazaguanine biosynthesis.</text>
</comment>
<comment type="subunit">
    <text evidence="1">Homodimer.</text>
</comment>
<comment type="similarity">
    <text evidence="1">Belongs to the radical SAM superfamily. 7-carboxy-7-deazaguanine synthase family.</text>
</comment>
<protein>
    <recommendedName>
        <fullName evidence="1">7-carboxy-7-deazaguanine synthase</fullName>
        <shortName evidence="1">CDG synthase</shortName>
        <ecNumber evidence="1">4.3.99.3</ecNumber>
    </recommendedName>
    <alternativeName>
        <fullName evidence="1">Queuosine biosynthesis protein QueE</fullName>
    </alternativeName>
</protein>
<gene>
    <name evidence="1" type="primary">queE</name>
    <name type="ordered locus">CT0318</name>
</gene>